<reference key="1">
    <citation type="journal article" date="2008" name="DNA Res.">
        <title>Complete genome sequence and comparative analysis of the wild-type commensal Escherichia coli strain SE11 isolated from a healthy adult.</title>
        <authorList>
            <person name="Oshima K."/>
            <person name="Toh H."/>
            <person name="Ogura Y."/>
            <person name="Sasamoto H."/>
            <person name="Morita H."/>
            <person name="Park S.-H."/>
            <person name="Ooka T."/>
            <person name="Iyoda S."/>
            <person name="Taylor T.D."/>
            <person name="Hayashi T."/>
            <person name="Itoh K."/>
            <person name="Hattori M."/>
        </authorList>
    </citation>
    <scope>NUCLEOTIDE SEQUENCE [LARGE SCALE GENOMIC DNA]</scope>
    <source>
        <strain>SE11</strain>
    </source>
</reference>
<protein>
    <recommendedName>
        <fullName evidence="1">S-adenosylmethionine synthase</fullName>
        <shortName evidence="1">AdoMet synthase</shortName>
        <ecNumber evidence="1">2.5.1.6</ecNumber>
    </recommendedName>
    <alternativeName>
        <fullName evidence="1">MAT</fullName>
    </alternativeName>
    <alternativeName>
        <fullName evidence="1">Methionine adenosyltransferase</fullName>
    </alternativeName>
</protein>
<dbReference type="EC" id="2.5.1.6" evidence="1"/>
<dbReference type="EMBL" id="AP009240">
    <property type="protein sequence ID" value="BAG78734.1"/>
    <property type="molecule type" value="Genomic_DNA"/>
</dbReference>
<dbReference type="RefSeq" id="WP_001062128.1">
    <property type="nucleotide sequence ID" value="NC_011415.1"/>
</dbReference>
<dbReference type="SMR" id="B6I780"/>
<dbReference type="GeneID" id="93779055"/>
<dbReference type="KEGG" id="ecy:ECSE_3210"/>
<dbReference type="HOGENOM" id="CLU_041802_1_1_6"/>
<dbReference type="UniPathway" id="UPA00315">
    <property type="reaction ID" value="UER00080"/>
</dbReference>
<dbReference type="Proteomes" id="UP000008199">
    <property type="component" value="Chromosome"/>
</dbReference>
<dbReference type="GO" id="GO:0005737">
    <property type="term" value="C:cytoplasm"/>
    <property type="evidence" value="ECO:0007669"/>
    <property type="project" value="UniProtKB-SubCell"/>
</dbReference>
<dbReference type="GO" id="GO:0005524">
    <property type="term" value="F:ATP binding"/>
    <property type="evidence" value="ECO:0007669"/>
    <property type="project" value="UniProtKB-UniRule"/>
</dbReference>
<dbReference type="GO" id="GO:0000287">
    <property type="term" value="F:magnesium ion binding"/>
    <property type="evidence" value="ECO:0007669"/>
    <property type="project" value="UniProtKB-UniRule"/>
</dbReference>
<dbReference type="GO" id="GO:0004478">
    <property type="term" value="F:methionine adenosyltransferase activity"/>
    <property type="evidence" value="ECO:0007669"/>
    <property type="project" value="UniProtKB-UniRule"/>
</dbReference>
<dbReference type="GO" id="GO:0006730">
    <property type="term" value="P:one-carbon metabolic process"/>
    <property type="evidence" value="ECO:0007669"/>
    <property type="project" value="UniProtKB-KW"/>
</dbReference>
<dbReference type="GO" id="GO:0006556">
    <property type="term" value="P:S-adenosylmethionine biosynthetic process"/>
    <property type="evidence" value="ECO:0007669"/>
    <property type="project" value="UniProtKB-UniRule"/>
</dbReference>
<dbReference type="CDD" id="cd18079">
    <property type="entry name" value="S-AdoMet_synt"/>
    <property type="match status" value="1"/>
</dbReference>
<dbReference type="FunFam" id="3.30.300.10:FF:000001">
    <property type="entry name" value="S-adenosylmethionine synthase"/>
    <property type="match status" value="1"/>
</dbReference>
<dbReference type="FunFam" id="3.30.300.10:FF:000003">
    <property type="entry name" value="S-adenosylmethionine synthase"/>
    <property type="match status" value="1"/>
</dbReference>
<dbReference type="Gene3D" id="3.30.300.10">
    <property type="match status" value="3"/>
</dbReference>
<dbReference type="HAMAP" id="MF_00086">
    <property type="entry name" value="S_AdoMet_synth1"/>
    <property type="match status" value="1"/>
</dbReference>
<dbReference type="InterPro" id="IPR022631">
    <property type="entry name" value="ADOMET_SYNTHASE_CS"/>
</dbReference>
<dbReference type="InterPro" id="IPR022630">
    <property type="entry name" value="S-AdoMet_synt_C"/>
</dbReference>
<dbReference type="InterPro" id="IPR022629">
    <property type="entry name" value="S-AdoMet_synt_central"/>
</dbReference>
<dbReference type="InterPro" id="IPR022628">
    <property type="entry name" value="S-AdoMet_synt_N"/>
</dbReference>
<dbReference type="InterPro" id="IPR002133">
    <property type="entry name" value="S-AdoMet_synthetase"/>
</dbReference>
<dbReference type="InterPro" id="IPR022636">
    <property type="entry name" value="S-AdoMet_synthetase_sfam"/>
</dbReference>
<dbReference type="NCBIfam" id="TIGR01034">
    <property type="entry name" value="metK"/>
    <property type="match status" value="1"/>
</dbReference>
<dbReference type="PANTHER" id="PTHR11964">
    <property type="entry name" value="S-ADENOSYLMETHIONINE SYNTHETASE"/>
    <property type="match status" value="1"/>
</dbReference>
<dbReference type="Pfam" id="PF02773">
    <property type="entry name" value="S-AdoMet_synt_C"/>
    <property type="match status" value="1"/>
</dbReference>
<dbReference type="Pfam" id="PF02772">
    <property type="entry name" value="S-AdoMet_synt_M"/>
    <property type="match status" value="1"/>
</dbReference>
<dbReference type="Pfam" id="PF00438">
    <property type="entry name" value="S-AdoMet_synt_N"/>
    <property type="match status" value="1"/>
</dbReference>
<dbReference type="PIRSF" id="PIRSF000497">
    <property type="entry name" value="MAT"/>
    <property type="match status" value="1"/>
</dbReference>
<dbReference type="SUPFAM" id="SSF55973">
    <property type="entry name" value="S-adenosylmethionine synthetase"/>
    <property type="match status" value="3"/>
</dbReference>
<dbReference type="PROSITE" id="PS00376">
    <property type="entry name" value="ADOMET_SYNTHASE_1"/>
    <property type="match status" value="1"/>
</dbReference>
<dbReference type="PROSITE" id="PS00377">
    <property type="entry name" value="ADOMET_SYNTHASE_2"/>
    <property type="match status" value="1"/>
</dbReference>
<proteinExistence type="inferred from homology"/>
<feature type="chain" id="PRO_1000093048" description="S-adenosylmethionine synthase">
    <location>
        <begin position="1"/>
        <end position="384"/>
    </location>
</feature>
<feature type="region of interest" description="Flexible loop" evidence="1">
    <location>
        <begin position="99"/>
        <end position="109"/>
    </location>
</feature>
<feature type="binding site" description="in other chain" evidence="1">
    <location>
        <position position="15"/>
    </location>
    <ligand>
        <name>ATP</name>
        <dbReference type="ChEBI" id="CHEBI:30616"/>
        <note>ligand shared between two neighboring subunits</note>
    </ligand>
</feature>
<feature type="binding site" evidence="1">
    <location>
        <position position="17"/>
    </location>
    <ligand>
        <name>Mg(2+)</name>
        <dbReference type="ChEBI" id="CHEBI:18420"/>
    </ligand>
</feature>
<feature type="binding site" evidence="1">
    <location>
        <position position="43"/>
    </location>
    <ligand>
        <name>K(+)</name>
        <dbReference type="ChEBI" id="CHEBI:29103"/>
    </ligand>
</feature>
<feature type="binding site" description="in other chain" evidence="1">
    <location>
        <position position="56"/>
    </location>
    <ligand>
        <name>L-methionine</name>
        <dbReference type="ChEBI" id="CHEBI:57844"/>
        <note>ligand shared between two neighboring subunits</note>
    </ligand>
</feature>
<feature type="binding site" description="in other chain" evidence="1">
    <location>
        <position position="99"/>
    </location>
    <ligand>
        <name>L-methionine</name>
        <dbReference type="ChEBI" id="CHEBI:57844"/>
        <note>ligand shared between two neighboring subunits</note>
    </ligand>
</feature>
<feature type="binding site" description="in other chain" evidence="1">
    <location>
        <begin position="164"/>
        <end position="166"/>
    </location>
    <ligand>
        <name>ATP</name>
        <dbReference type="ChEBI" id="CHEBI:30616"/>
        <note>ligand shared between two neighboring subunits</note>
    </ligand>
</feature>
<feature type="binding site" description="in other chain" evidence="1">
    <location>
        <begin position="230"/>
        <end position="231"/>
    </location>
    <ligand>
        <name>ATP</name>
        <dbReference type="ChEBI" id="CHEBI:30616"/>
        <note>ligand shared between two neighboring subunits</note>
    </ligand>
</feature>
<feature type="binding site" evidence="1">
    <location>
        <position position="239"/>
    </location>
    <ligand>
        <name>ATP</name>
        <dbReference type="ChEBI" id="CHEBI:30616"/>
        <note>ligand shared between two neighboring subunits</note>
    </ligand>
</feature>
<feature type="binding site" evidence="1">
    <location>
        <position position="239"/>
    </location>
    <ligand>
        <name>L-methionine</name>
        <dbReference type="ChEBI" id="CHEBI:57844"/>
        <note>ligand shared between two neighboring subunits</note>
    </ligand>
</feature>
<feature type="binding site" description="in other chain" evidence="1">
    <location>
        <begin position="245"/>
        <end position="246"/>
    </location>
    <ligand>
        <name>ATP</name>
        <dbReference type="ChEBI" id="CHEBI:30616"/>
        <note>ligand shared between two neighboring subunits</note>
    </ligand>
</feature>
<feature type="binding site" evidence="1">
    <location>
        <position position="262"/>
    </location>
    <ligand>
        <name>ATP</name>
        <dbReference type="ChEBI" id="CHEBI:30616"/>
        <note>ligand shared between two neighboring subunits</note>
    </ligand>
</feature>
<feature type="binding site" evidence="1">
    <location>
        <position position="266"/>
    </location>
    <ligand>
        <name>ATP</name>
        <dbReference type="ChEBI" id="CHEBI:30616"/>
        <note>ligand shared between two neighboring subunits</note>
    </ligand>
</feature>
<feature type="binding site" description="in other chain" evidence="1">
    <location>
        <position position="270"/>
    </location>
    <ligand>
        <name>L-methionine</name>
        <dbReference type="ChEBI" id="CHEBI:57844"/>
        <note>ligand shared between two neighboring subunits</note>
    </ligand>
</feature>
<evidence type="ECO:0000255" key="1">
    <source>
        <dbReference type="HAMAP-Rule" id="MF_00086"/>
    </source>
</evidence>
<gene>
    <name evidence="1" type="primary">metK</name>
    <name type="ordered locus">ECSE_3210</name>
</gene>
<name>METK_ECOSE</name>
<keyword id="KW-0067">ATP-binding</keyword>
<keyword id="KW-0963">Cytoplasm</keyword>
<keyword id="KW-0460">Magnesium</keyword>
<keyword id="KW-0479">Metal-binding</keyword>
<keyword id="KW-0547">Nucleotide-binding</keyword>
<keyword id="KW-0554">One-carbon metabolism</keyword>
<keyword id="KW-0630">Potassium</keyword>
<keyword id="KW-0808">Transferase</keyword>
<accession>B6I780</accession>
<sequence>MAKHLFTSESVSEGHPDKIADQISDAVLDAILEQDPKARVACETYVKTGMVLVGGEITTSAWVDIEEITRNTVREIGYVHSDMGFDANSCAVLSAIGKQSPDINQGVDRADPLEQGAGDQGLMFGYATNETDVLMPAPITYAHRLVQRQAEVRKNGTLPWLRPDAKSQVTFQYDDGKIVGIDAVVLSTQHSEEIDQKSLQEAVMEEIIKPILPAEWLTSATKFFINPTGRFVIGGPMGDCGLTGRKIIVDTYGGMARHGGGAFSGKDPSKVDRSAAYAARYVAKNIVAAGLADRCEIQVSYAIGVAEPTSIMVETFGTEKVPSEQLTLLVREFFDLRPYGLIQMLDLLHPIYKETAAYGHFGREHFPWEKTDKAQLLRDAAGLK</sequence>
<organism>
    <name type="scientific">Escherichia coli (strain SE11)</name>
    <dbReference type="NCBI Taxonomy" id="409438"/>
    <lineage>
        <taxon>Bacteria</taxon>
        <taxon>Pseudomonadati</taxon>
        <taxon>Pseudomonadota</taxon>
        <taxon>Gammaproteobacteria</taxon>
        <taxon>Enterobacterales</taxon>
        <taxon>Enterobacteriaceae</taxon>
        <taxon>Escherichia</taxon>
    </lineage>
</organism>
<comment type="function">
    <text evidence="1">Catalyzes the formation of S-adenosylmethionine (AdoMet) from methionine and ATP. The overall synthetic reaction is composed of two sequential steps, AdoMet formation and the subsequent tripolyphosphate hydrolysis which occurs prior to release of AdoMet from the enzyme.</text>
</comment>
<comment type="catalytic activity">
    <reaction evidence="1">
        <text>L-methionine + ATP + H2O = S-adenosyl-L-methionine + phosphate + diphosphate</text>
        <dbReference type="Rhea" id="RHEA:21080"/>
        <dbReference type="ChEBI" id="CHEBI:15377"/>
        <dbReference type="ChEBI" id="CHEBI:30616"/>
        <dbReference type="ChEBI" id="CHEBI:33019"/>
        <dbReference type="ChEBI" id="CHEBI:43474"/>
        <dbReference type="ChEBI" id="CHEBI:57844"/>
        <dbReference type="ChEBI" id="CHEBI:59789"/>
        <dbReference type="EC" id="2.5.1.6"/>
    </reaction>
</comment>
<comment type="cofactor">
    <cofactor evidence="1">
        <name>Mg(2+)</name>
        <dbReference type="ChEBI" id="CHEBI:18420"/>
    </cofactor>
    <text evidence="1">Binds 2 divalent ions per subunit.</text>
</comment>
<comment type="cofactor">
    <cofactor evidence="1">
        <name>K(+)</name>
        <dbReference type="ChEBI" id="CHEBI:29103"/>
    </cofactor>
    <text evidence="1">Binds 1 potassium ion per subunit.</text>
</comment>
<comment type="pathway">
    <text evidence="1">Amino-acid biosynthesis; S-adenosyl-L-methionine biosynthesis; S-adenosyl-L-methionine from L-methionine: step 1/1.</text>
</comment>
<comment type="subunit">
    <text evidence="1">Homotetramer; dimer of dimers.</text>
</comment>
<comment type="subcellular location">
    <subcellularLocation>
        <location evidence="1">Cytoplasm</location>
    </subcellularLocation>
</comment>
<comment type="similarity">
    <text evidence="1">Belongs to the AdoMet synthase family.</text>
</comment>